<proteinExistence type="evidence at protein level"/>
<protein>
    <recommendedName>
        <fullName>Hexuronic acid methyltransferase AglP</fullName>
        <ecNumber>2.1.1.-</ecNumber>
    </recommendedName>
    <alternativeName>
        <fullName>Archaeal glycosylation protein P</fullName>
    </alternativeName>
</protein>
<evidence type="ECO:0000269" key="1">
    <source>
    </source>
</evidence>
<evidence type="ECO:0000269" key="2">
    <source>
    </source>
</evidence>
<evidence type="ECO:0000269" key="3">
    <source>
    </source>
</evidence>
<evidence type="ECO:0000305" key="4"/>
<keyword id="KW-0963">Cytoplasm</keyword>
<keyword id="KW-0489">Methyltransferase</keyword>
<keyword id="KW-1185">Reference proteome</keyword>
<keyword id="KW-0808">Transferase</keyword>
<gene>
    <name type="primary">aglP</name>
    <name type="ordered locus">HVO_1522</name>
</gene>
<reference key="1">
    <citation type="journal article" date="2009" name="J. Bacteriol.">
        <title>Manual annotation, transcriptional analysis, and protein expression studies reveal novel genes in the agl cluster responsible for N glycosylation in the halophilic archaeon Haloferax volcanii.</title>
        <authorList>
            <person name="Yurist-Doutsch S."/>
            <person name="Eichler J."/>
        </authorList>
    </citation>
    <scope>NUCLEOTIDE SEQUENCE [GENOMIC DNA]</scope>
    <scope>GENE NAME</scope>
</reference>
<reference key="2">
    <citation type="journal article" date="2010" name="PLoS ONE">
        <title>The complete genome sequence of Haloferax volcanii DS2, a model archaeon.</title>
        <authorList>
            <person name="Hartman A.L."/>
            <person name="Norais C."/>
            <person name="Badger J.H."/>
            <person name="Delmas S."/>
            <person name="Haldenby S."/>
            <person name="Madupu R."/>
            <person name="Robinson J."/>
            <person name="Khouri H."/>
            <person name="Ren Q."/>
            <person name="Lowe T.M."/>
            <person name="Maupin-Furlow J."/>
            <person name="Pohlschroder M."/>
            <person name="Daniels C."/>
            <person name="Pfeiffer F."/>
            <person name="Allers T."/>
            <person name="Eisen J.A."/>
        </authorList>
    </citation>
    <scope>NUCLEOTIDE SEQUENCE [LARGE SCALE GENOMIC DNA]</scope>
    <source>
        <strain>ATCC 29605 / DSM 3757 / JCM 8879 / NBRC 14742 / NCIMB 2012 / VKM B-1768 / DS2</strain>
    </source>
</reference>
<reference key="3">
    <citation type="journal article" date="2010" name="Mol. Microbiol.">
        <title>AglP is a S-adenosyl-L-methionine-dependent methyltransferase that participates in the N-glycosylation pathway of Haloferax volcanii.</title>
        <authorList>
            <person name="Magidovich H."/>
            <person name="Yurist-Doutsch S."/>
            <person name="Konrad Z."/>
            <person name="Ventura V.V."/>
            <person name="Dell A."/>
            <person name="Hitchen P.G."/>
            <person name="Eichler J."/>
        </authorList>
    </citation>
    <scope>FUNCTION AS A METHYLTRANSFERASE</scope>
    <scope>PATHWAY</scope>
    <scope>SUBCELLULAR LOCATION</scope>
    <source>
        <strain>DS2 / DS70</strain>
    </source>
</reference>
<reference key="4">
    <citation type="journal article" date="2010" name="Mol. Microbiol.">
        <title>Distinct glycan-charged phosphodolichol carriers are required for the assembly of the pentasaccharide N-linked to the Haloferax volcanii S-layer glycoprotein.</title>
        <authorList>
            <person name="Guan Z."/>
            <person name="Naparstek S."/>
            <person name="Kaminski L."/>
            <person name="Konrad Z."/>
            <person name="Eichler J."/>
        </authorList>
    </citation>
    <scope>FUNCTION</scope>
    <source>
        <strain>H53</strain>
    </source>
</reference>
<reference key="5">
    <citation type="journal article" date="2012" name="J. Bacteriol.">
        <title>N-glycosylation of Haloferax volcanii flagellins requires known Agl proteins and is essential for biosynthesis of stable flagella.</title>
        <authorList>
            <person name="Tripepi M."/>
            <person name="You J."/>
            <person name="Temel S."/>
            <person name="Onder O."/>
            <person name="Brisson D."/>
            <person name="Pohlschroder M."/>
        </authorList>
    </citation>
    <scope>FUNCTION IN GLYCOSYLATION OF FLAGELLINS</scope>
    <scope>DISRUPTION PHENOTYPE</scope>
    <source>
        <strain>H53</strain>
    </source>
</reference>
<sequence length="239" mass="26263">MTIVKKVARLRDWIALKTGAIRSPMIAEVSGYAARFTVQSVEEIWRIRDLRGEQDVIRLLLEEAEEDDVLWDVGSNIGTHACICSTKANVFAFEPNPDTFDRLTENSDRAPGTVIPLRYGLSSSSGDISFEPSPIAANGTHKVSTEGSMTIKTISGDELVESGEVPKPNVVKVDVEGHELEVLKGMTNALQSVNFVIVEIHAGVDPKDVTKLLSEAKLSTEITKLNRDEDFVIGRRQND</sequence>
<name>AGLP_HALVD</name>
<organism>
    <name type="scientific">Haloferax volcanii (strain ATCC 29605 / DSM 3757 / JCM 8879 / NBRC 14742 / NCIMB 2012 / VKM B-1768 / DS2)</name>
    <name type="common">Halobacterium volcanii</name>
    <dbReference type="NCBI Taxonomy" id="309800"/>
    <lineage>
        <taxon>Archaea</taxon>
        <taxon>Methanobacteriati</taxon>
        <taxon>Methanobacteriota</taxon>
        <taxon>Stenosarchaea group</taxon>
        <taxon>Halobacteria</taxon>
        <taxon>Halobacteriales</taxon>
        <taxon>Haloferacaceae</taxon>
        <taxon>Haloferax</taxon>
    </lineage>
</organism>
<feature type="chain" id="PRO_0000415367" description="Hexuronic acid methyltransferase AglP">
    <location>
        <begin position="1"/>
        <end position="239"/>
    </location>
</feature>
<dbReference type="EC" id="2.1.1.-"/>
<dbReference type="EMBL" id="FM955369">
    <property type="protein sequence ID" value="CAW30727.1"/>
    <property type="molecule type" value="Genomic_DNA"/>
</dbReference>
<dbReference type="EMBL" id="CP001956">
    <property type="protein sequence ID" value="ADE04550.1"/>
    <property type="molecule type" value="Genomic_DNA"/>
</dbReference>
<dbReference type="RefSeq" id="WP_004041399.1">
    <property type="nucleotide sequence ID" value="NC_013967.1"/>
</dbReference>
<dbReference type="SMR" id="D4GYG5"/>
<dbReference type="STRING" id="309800.HVO_1522"/>
<dbReference type="PaxDb" id="309800-C498_02960"/>
<dbReference type="EnsemblBacteria" id="ADE04550">
    <property type="protein sequence ID" value="ADE04550"/>
    <property type="gene ID" value="HVO_1522"/>
</dbReference>
<dbReference type="GeneID" id="31787472"/>
<dbReference type="KEGG" id="hvo:HVO_1522"/>
<dbReference type="eggNOG" id="arCOG01402">
    <property type="taxonomic scope" value="Archaea"/>
</dbReference>
<dbReference type="HOGENOM" id="CLU_081183_0_0_2"/>
<dbReference type="OrthoDB" id="275825at2157"/>
<dbReference type="BioCyc" id="MetaCyc:MONOMER-19287"/>
<dbReference type="UniPathway" id="UPA00977"/>
<dbReference type="Proteomes" id="UP000008243">
    <property type="component" value="Chromosome"/>
</dbReference>
<dbReference type="GO" id="GO:0005737">
    <property type="term" value="C:cytoplasm"/>
    <property type="evidence" value="ECO:0007669"/>
    <property type="project" value="UniProtKB-SubCell"/>
</dbReference>
<dbReference type="GO" id="GO:0008168">
    <property type="term" value="F:methyltransferase activity"/>
    <property type="evidence" value="ECO:0007669"/>
    <property type="project" value="UniProtKB-KW"/>
</dbReference>
<dbReference type="GO" id="GO:0032259">
    <property type="term" value="P:methylation"/>
    <property type="evidence" value="ECO:0007669"/>
    <property type="project" value="UniProtKB-KW"/>
</dbReference>
<dbReference type="GO" id="GO:0045232">
    <property type="term" value="P:S-layer organization"/>
    <property type="evidence" value="ECO:0007669"/>
    <property type="project" value="UniProtKB-UniPathway"/>
</dbReference>
<dbReference type="Gene3D" id="3.40.50.150">
    <property type="entry name" value="Vaccinia Virus protein VP39"/>
    <property type="match status" value="1"/>
</dbReference>
<dbReference type="InterPro" id="IPR006342">
    <property type="entry name" value="FkbM_mtfrase"/>
</dbReference>
<dbReference type="InterPro" id="IPR052514">
    <property type="entry name" value="SAM-dependent_MTase"/>
</dbReference>
<dbReference type="InterPro" id="IPR029063">
    <property type="entry name" value="SAM-dependent_MTases_sf"/>
</dbReference>
<dbReference type="NCBIfam" id="TIGR01444">
    <property type="entry name" value="fkbM_fam"/>
    <property type="match status" value="1"/>
</dbReference>
<dbReference type="PANTHER" id="PTHR34203">
    <property type="entry name" value="METHYLTRANSFERASE, FKBM FAMILY PROTEIN"/>
    <property type="match status" value="1"/>
</dbReference>
<dbReference type="PANTHER" id="PTHR34203:SF15">
    <property type="entry name" value="SLL1173 PROTEIN"/>
    <property type="match status" value="1"/>
</dbReference>
<dbReference type="Pfam" id="PF05050">
    <property type="entry name" value="Methyltransf_21"/>
    <property type="match status" value="1"/>
</dbReference>
<dbReference type="SUPFAM" id="SSF53335">
    <property type="entry name" value="S-adenosyl-L-methionine-dependent methyltransferases"/>
    <property type="match status" value="1"/>
</dbReference>
<comment type="function">
    <text evidence="1 2 3">Involved in the assembly of a N-linked pentasaccharide that decorates the S-layer glycoprotein and flagellins. S-adenosyl-L-methionine-dependent methyltransferase that modifies the hexuronic acid found at position 4 of the pentasaccharide.</text>
</comment>
<comment type="pathway">
    <text evidence="1">Cell surface structure biogenesis; S-layer biogenesis.</text>
</comment>
<comment type="subcellular location">
    <subcellularLocation>
        <location evidence="1">Cytoplasm</location>
    </subcellularLocation>
</comment>
<comment type="disruption phenotype">
    <text evidence="3">Mutants exhibit defective or limited motility.</text>
</comment>
<comment type="similarity">
    <text evidence="4">Belongs to the FkbM methyltransferase family.</text>
</comment>
<accession>D4GYG5</accession>
<accession>B7VU77</accession>